<protein>
    <recommendedName>
        <fullName>Serine/threonine-protein kinase ppk24, mitochondrial</fullName>
        <ecNumber>2.7.11.1</ecNumber>
    </recommendedName>
    <alternativeName>
        <fullName>Meiotically up-regulated gene 29 protein</fullName>
    </alternativeName>
</protein>
<gene>
    <name type="primary">ppk24</name>
    <name type="synonym">mug29</name>
    <name type="ORF">SPBC21.07c</name>
</gene>
<keyword id="KW-0067">ATP-binding</keyword>
<keyword id="KW-0418">Kinase</keyword>
<keyword id="KW-0469">Meiosis</keyword>
<keyword id="KW-0496">Mitochondrion</keyword>
<keyword id="KW-0547">Nucleotide-binding</keyword>
<keyword id="KW-1185">Reference proteome</keyword>
<keyword id="KW-0723">Serine/threonine-protein kinase</keyword>
<keyword id="KW-0808">Transferase</keyword>
<keyword id="KW-0809">Transit peptide</keyword>
<organism>
    <name type="scientific">Schizosaccharomyces pombe (strain 972 / ATCC 24843)</name>
    <name type="common">Fission yeast</name>
    <dbReference type="NCBI Taxonomy" id="284812"/>
    <lineage>
        <taxon>Eukaryota</taxon>
        <taxon>Fungi</taxon>
        <taxon>Dikarya</taxon>
        <taxon>Ascomycota</taxon>
        <taxon>Taphrinomycotina</taxon>
        <taxon>Schizosaccharomycetes</taxon>
        <taxon>Schizosaccharomycetales</taxon>
        <taxon>Schizosaccharomycetaceae</taxon>
        <taxon>Schizosaccharomyces</taxon>
    </lineage>
</organism>
<accession>O94647</accession>
<comment type="function">
    <text evidence="4">Has a role late in meiosis.</text>
</comment>
<comment type="catalytic activity">
    <reaction>
        <text>L-seryl-[protein] + ATP = O-phospho-L-seryl-[protein] + ADP + H(+)</text>
        <dbReference type="Rhea" id="RHEA:17989"/>
        <dbReference type="Rhea" id="RHEA-COMP:9863"/>
        <dbReference type="Rhea" id="RHEA-COMP:11604"/>
        <dbReference type="ChEBI" id="CHEBI:15378"/>
        <dbReference type="ChEBI" id="CHEBI:29999"/>
        <dbReference type="ChEBI" id="CHEBI:30616"/>
        <dbReference type="ChEBI" id="CHEBI:83421"/>
        <dbReference type="ChEBI" id="CHEBI:456216"/>
        <dbReference type="EC" id="2.7.11.1"/>
    </reaction>
</comment>
<comment type="catalytic activity">
    <reaction>
        <text>L-threonyl-[protein] + ATP = O-phospho-L-threonyl-[protein] + ADP + H(+)</text>
        <dbReference type="Rhea" id="RHEA:46608"/>
        <dbReference type="Rhea" id="RHEA-COMP:11060"/>
        <dbReference type="Rhea" id="RHEA-COMP:11605"/>
        <dbReference type="ChEBI" id="CHEBI:15378"/>
        <dbReference type="ChEBI" id="CHEBI:30013"/>
        <dbReference type="ChEBI" id="CHEBI:30616"/>
        <dbReference type="ChEBI" id="CHEBI:61977"/>
        <dbReference type="ChEBI" id="CHEBI:456216"/>
        <dbReference type="EC" id="2.7.11.1"/>
    </reaction>
</comment>
<comment type="subcellular location">
    <subcellularLocation>
        <location evidence="5">Mitochondrion</location>
    </subcellularLocation>
</comment>
<comment type="similarity">
    <text evidence="2">Belongs to the protein kinase superfamily. Ser/Thr protein kinase family.</text>
</comment>
<dbReference type="EC" id="2.7.11.1"/>
<dbReference type="EMBL" id="CU329671">
    <property type="protein sequence ID" value="CAB36887.1"/>
    <property type="molecule type" value="Genomic_DNA"/>
</dbReference>
<dbReference type="PIR" id="T39889">
    <property type="entry name" value="T39889"/>
</dbReference>
<dbReference type="RefSeq" id="NP_596341.1">
    <property type="nucleotide sequence ID" value="NM_001022262.2"/>
</dbReference>
<dbReference type="SMR" id="O94647"/>
<dbReference type="FunCoup" id="O94647">
    <property type="interactions" value="474"/>
</dbReference>
<dbReference type="STRING" id="284812.O94647"/>
<dbReference type="iPTMnet" id="O94647"/>
<dbReference type="PaxDb" id="4896-SPBC21.07c.1"/>
<dbReference type="EnsemblFungi" id="SPBC21.07c.1">
    <property type="protein sequence ID" value="SPBC21.07c.1:pep"/>
    <property type="gene ID" value="SPBC21.07c"/>
</dbReference>
<dbReference type="GeneID" id="2540596"/>
<dbReference type="KEGG" id="spo:2540596"/>
<dbReference type="PomBase" id="SPBC21.07c">
    <property type="gene designation" value="ppk24"/>
</dbReference>
<dbReference type="VEuPathDB" id="FungiDB:SPBC21.07c"/>
<dbReference type="eggNOG" id="KOG0590">
    <property type="taxonomic scope" value="Eukaryota"/>
</dbReference>
<dbReference type="HOGENOM" id="CLU_616730_0_0_1"/>
<dbReference type="InParanoid" id="O94647"/>
<dbReference type="OMA" id="FHENEYC"/>
<dbReference type="PhylomeDB" id="O94647"/>
<dbReference type="PRO" id="PR:O94647"/>
<dbReference type="Proteomes" id="UP000002485">
    <property type="component" value="Chromosome II"/>
</dbReference>
<dbReference type="GO" id="GO:0005737">
    <property type="term" value="C:cytoplasm"/>
    <property type="evidence" value="ECO:0000318"/>
    <property type="project" value="GO_Central"/>
</dbReference>
<dbReference type="GO" id="GO:0005739">
    <property type="term" value="C:mitochondrion"/>
    <property type="evidence" value="ECO:0007005"/>
    <property type="project" value="PomBase"/>
</dbReference>
<dbReference type="GO" id="GO:0005634">
    <property type="term" value="C:nucleus"/>
    <property type="evidence" value="ECO:0000318"/>
    <property type="project" value="GO_Central"/>
</dbReference>
<dbReference type="GO" id="GO:0005524">
    <property type="term" value="F:ATP binding"/>
    <property type="evidence" value="ECO:0007669"/>
    <property type="project" value="UniProtKB-KW"/>
</dbReference>
<dbReference type="GO" id="GO:0106310">
    <property type="term" value="F:protein serine kinase activity"/>
    <property type="evidence" value="ECO:0007669"/>
    <property type="project" value="RHEA"/>
</dbReference>
<dbReference type="GO" id="GO:0004674">
    <property type="term" value="F:protein serine/threonine kinase activity"/>
    <property type="evidence" value="ECO:0000318"/>
    <property type="project" value="GO_Central"/>
</dbReference>
<dbReference type="GO" id="GO:0000086">
    <property type="term" value="P:G2/M transition of mitotic cell cycle"/>
    <property type="evidence" value="ECO:0000318"/>
    <property type="project" value="GO_Central"/>
</dbReference>
<dbReference type="GO" id="GO:0051321">
    <property type="term" value="P:meiotic cell cycle"/>
    <property type="evidence" value="ECO:0007669"/>
    <property type="project" value="UniProtKB-KW"/>
</dbReference>
<dbReference type="GO" id="GO:1902267">
    <property type="term" value="P:regulation of polyamine transmembrane transport"/>
    <property type="evidence" value="ECO:0000266"/>
    <property type="project" value="PomBase"/>
</dbReference>
<dbReference type="GO" id="GO:0023052">
    <property type="term" value="P:signaling"/>
    <property type="evidence" value="ECO:0000303"/>
    <property type="project" value="PomBase"/>
</dbReference>
<dbReference type="CDD" id="cd13994">
    <property type="entry name" value="STKc_HAL4_like"/>
    <property type="match status" value="1"/>
</dbReference>
<dbReference type="Gene3D" id="1.10.510.10">
    <property type="entry name" value="Transferase(Phosphotransferase) domain 1"/>
    <property type="match status" value="1"/>
</dbReference>
<dbReference type="InterPro" id="IPR011009">
    <property type="entry name" value="Kinase-like_dom_sf"/>
</dbReference>
<dbReference type="InterPro" id="IPR000719">
    <property type="entry name" value="Prot_kinase_dom"/>
</dbReference>
<dbReference type="InterPro" id="IPR008271">
    <property type="entry name" value="Ser/Thr_kinase_AS"/>
</dbReference>
<dbReference type="PANTHER" id="PTHR24346">
    <property type="entry name" value="MAP/MICROTUBULE AFFINITY-REGULATING KINASE"/>
    <property type="match status" value="1"/>
</dbReference>
<dbReference type="PANTHER" id="PTHR24346:SF76">
    <property type="entry name" value="NON-SPECIFIC SERINE_THREONINE PROTEIN KINASE"/>
    <property type="match status" value="1"/>
</dbReference>
<dbReference type="Pfam" id="PF00069">
    <property type="entry name" value="Pkinase"/>
    <property type="match status" value="1"/>
</dbReference>
<dbReference type="SMART" id="SM00220">
    <property type="entry name" value="S_TKc"/>
    <property type="match status" value="1"/>
</dbReference>
<dbReference type="SUPFAM" id="SSF56112">
    <property type="entry name" value="Protein kinase-like (PK-like)"/>
    <property type="match status" value="1"/>
</dbReference>
<dbReference type="PROSITE" id="PS50011">
    <property type="entry name" value="PROTEIN_KINASE_DOM"/>
    <property type="match status" value="1"/>
</dbReference>
<dbReference type="PROSITE" id="PS00108">
    <property type="entry name" value="PROTEIN_KINASE_ST"/>
    <property type="match status" value="1"/>
</dbReference>
<name>PPK24_SCHPO</name>
<evidence type="ECO:0000255" key="1"/>
<evidence type="ECO:0000255" key="2">
    <source>
        <dbReference type="PROSITE-ProRule" id="PRU00159"/>
    </source>
</evidence>
<evidence type="ECO:0000255" key="3">
    <source>
        <dbReference type="PROSITE-ProRule" id="PRU10027"/>
    </source>
</evidence>
<evidence type="ECO:0000269" key="4">
    <source>
    </source>
</evidence>
<evidence type="ECO:0000269" key="5">
    <source>
    </source>
</evidence>
<proteinExistence type="evidence at protein level"/>
<sequence>MTNYPFFRQGTIFVDNSAIQRNSENKNSLSIENIFGRFPKEFFQFFSINVSKSTTKKSSVVIKPSTITAPWLENEYLDSNTSLLSVHSIQPSFIGMSDFAIGLDPSLKRILPEIRFRLDFQHLKSIAKGATSTIKVVTHRDKITDAKIYYAAKVYRKTKTSHKKRLNTMVYFLREWSIQPKLDHPNILKVICPCVTLTSVFNKSAGFCLVQEYCPQGDLFKQIEEKVLTLEDKCCYLKQILQAVAYLQSQRIAHRDLKPENILIGRDGLLKLTDFGTSEIVGNPGDNESIRFVSGAVGSLAYLAPEAFHENEYCGLLADRWSCGILLKVLFTGYFPFKTSVKTDLYYSKYMSILTDTCGISSTDESSFQTEVIKQIPTLQPLRYIPEGAKKIILSLLNPDSQNRPSLDSILGTAWVRKLDCCSNFSTDHENKSLQEVDFDASKPITRKSLIPRIHNHQTLV</sequence>
<reference key="1">
    <citation type="journal article" date="2002" name="Nature">
        <title>The genome sequence of Schizosaccharomyces pombe.</title>
        <authorList>
            <person name="Wood V."/>
            <person name="Gwilliam R."/>
            <person name="Rajandream M.A."/>
            <person name="Lyne M.H."/>
            <person name="Lyne R."/>
            <person name="Stewart A."/>
            <person name="Sgouros J.G."/>
            <person name="Peat N."/>
            <person name="Hayles J."/>
            <person name="Baker S.G."/>
            <person name="Basham D."/>
            <person name="Bowman S."/>
            <person name="Brooks K."/>
            <person name="Brown D."/>
            <person name="Brown S."/>
            <person name="Chillingworth T."/>
            <person name="Churcher C.M."/>
            <person name="Collins M."/>
            <person name="Connor R."/>
            <person name="Cronin A."/>
            <person name="Davis P."/>
            <person name="Feltwell T."/>
            <person name="Fraser A."/>
            <person name="Gentles S."/>
            <person name="Goble A."/>
            <person name="Hamlin N."/>
            <person name="Harris D.E."/>
            <person name="Hidalgo J."/>
            <person name="Hodgson G."/>
            <person name="Holroyd S."/>
            <person name="Hornsby T."/>
            <person name="Howarth S."/>
            <person name="Huckle E.J."/>
            <person name="Hunt S."/>
            <person name="Jagels K."/>
            <person name="James K.D."/>
            <person name="Jones L."/>
            <person name="Jones M."/>
            <person name="Leather S."/>
            <person name="McDonald S."/>
            <person name="McLean J."/>
            <person name="Mooney P."/>
            <person name="Moule S."/>
            <person name="Mungall K.L."/>
            <person name="Murphy L.D."/>
            <person name="Niblett D."/>
            <person name="Odell C."/>
            <person name="Oliver K."/>
            <person name="O'Neil S."/>
            <person name="Pearson D."/>
            <person name="Quail M.A."/>
            <person name="Rabbinowitsch E."/>
            <person name="Rutherford K.M."/>
            <person name="Rutter S."/>
            <person name="Saunders D."/>
            <person name="Seeger K."/>
            <person name="Sharp S."/>
            <person name="Skelton J."/>
            <person name="Simmonds M.N."/>
            <person name="Squares R."/>
            <person name="Squares S."/>
            <person name="Stevens K."/>
            <person name="Taylor K."/>
            <person name="Taylor R.G."/>
            <person name="Tivey A."/>
            <person name="Walsh S.V."/>
            <person name="Warren T."/>
            <person name="Whitehead S."/>
            <person name="Woodward J.R."/>
            <person name="Volckaert G."/>
            <person name="Aert R."/>
            <person name="Robben J."/>
            <person name="Grymonprez B."/>
            <person name="Weltjens I."/>
            <person name="Vanstreels E."/>
            <person name="Rieger M."/>
            <person name="Schaefer M."/>
            <person name="Mueller-Auer S."/>
            <person name="Gabel C."/>
            <person name="Fuchs M."/>
            <person name="Duesterhoeft A."/>
            <person name="Fritzc C."/>
            <person name="Holzer E."/>
            <person name="Moestl D."/>
            <person name="Hilbert H."/>
            <person name="Borzym K."/>
            <person name="Langer I."/>
            <person name="Beck A."/>
            <person name="Lehrach H."/>
            <person name="Reinhardt R."/>
            <person name="Pohl T.M."/>
            <person name="Eger P."/>
            <person name="Zimmermann W."/>
            <person name="Wedler H."/>
            <person name="Wambutt R."/>
            <person name="Purnelle B."/>
            <person name="Goffeau A."/>
            <person name="Cadieu E."/>
            <person name="Dreano S."/>
            <person name="Gloux S."/>
            <person name="Lelaure V."/>
            <person name="Mottier S."/>
            <person name="Galibert F."/>
            <person name="Aves S.J."/>
            <person name="Xiang Z."/>
            <person name="Hunt C."/>
            <person name="Moore K."/>
            <person name="Hurst S.M."/>
            <person name="Lucas M."/>
            <person name="Rochet M."/>
            <person name="Gaillardin C."/>
            <person name="Tallada V.A."/>
            <person name="Garzon A."/>
            <person name="Thode G."/>
            <person name="Daga R.R."/>
            <person name="Cruzado L."/>
            <person name="Jimenez J."/>
            <person name="Sanchez M."/>
            <person name="del Rey F."/>
            <person name="Benito J."/>
            <person name="Dominguez A."/>
            <person name="Revuelta J.L."/>
            <person name="Moreno S."/>
            <person name="Armstrong J."/>
            <person name="Forsburg S.L."/>
            <person name="Cerutti L."/>
            <person name="Lowe T."/>
            <person name="McCombie W.R."/>
            <person name="Paulsen I."/>
            <person name="Potashkin J."/>
            <person name="Shpakovski G.V."/>
            <person name="Ussery D."/>
            <person name="Barrell B.G."/>
            <person name="Nurse P."/>
        </authorList>
    </citation>
    <scope>NUCLEOTIDE SEQUENCE [LARGE SCALE GENOMIC DNA]</scope>
    <source>
        <strain>972 / ATCC 24843</strain>
    </source>
</reference>
<reference key="2">
    <citation type="journal article" date="2005" name="Curr. Biol.">
        <title>A large-scale screen in S. pombe identifies seven novel genes required for critical meiotic events.</title>
        <authorList>
            <person name="Martin-Castellanos C."/>
            <person name="Blanco M."/>
            <person name="Rozalen A.E."/>
            <person name="Perez-Hidalgo L."/>
            <person name="Garcia A.I."/>
            <person name="Conde F."/>
            <person name="Mata J."/>
            <person name="Ellermeier C."/>
            <person name="Davis L."/>
            <person name="San-Segundo P."/>
            <person name="Smith G.R."/>
            <person name="Moreno S."/>
        </authorList>
    </citation>
    <scope>FUNCTION IN MEIOSIS</scope>
</reference>
<reference key="3">
    <citation type="journal article" date="2005" name="Eukaryot. Cell">
        <title>Systematic deletion analysis of fission yeast protein kinases.</title>
        <authorList>
            <person name="Bimbo A."/>
            <person name="Jia Y."/>
            <person name="Poh S.L."/>
            <person name="Karuturi R.K.M."/>
            <person name="den Elzen N."/>
            <person name="Peng X."/>
            <person name="Zheng L."/>
            <person name="O'Connell M."/>
            <person name="Liu E.T."/>
            <person name="Balasubramanian M.K."/>
            <person name="Liu J."/>
        </authorList>
    </citation>
    <scope>IDENTIFICATION</scope>
</reference>
<reference key="4">
    <citation type="journal article" date="2006" name="Nat. Biotechnol.">
        <title>ORFeome cloning and global analysis of protein localization in the fission yeast Schizosaccharomyces pombe.</title>
        <authorList>
            <person name="Matsuyama A."/>
            <person name="Arai R."/>
            <person name="Yashiroda Y."/>
            <person name="Shirai A."/>
            <person name="Kamata A."/>
            <person name="Sekido S."/>
            <person name="Kobayashi Y."/>
            <person name="Hashimoto A."/>
            <person name="Hamamoto M."/>
            <person name="Hiraoka Y."/>
            <person name="Horinouchi S."/>
            <person name="Yoshida M."/>
        </authorList>
    </citation>
    <scope>SUBCELLULAR LOCATION [LARGE SCALE ANALYSIS]</scope>
</reference>
<feature type="transit peptide" description="Mitochondrion" evidence="1">
    <location>
        <begin position="1"/>
        <end status="unknown"/>
    </location>
</feature>
<feature type="chain" id="PRO_0000256823" description="Serine/threonine-protein kinase ppk24, mitochondrial">
    <location>
        <begin status="unknown"/>
        <end position="461"/>
    </location>
</feature>
<feature type="domain" description="Protein kinase" evidence="2">
    <location>
        <begin position="120"/>
        <end position="416"/>
    </location>
</feature>
<feature type="active site" description="Proton acceptor" evidence="2 3">
    <location>
        <position position="256"/>
    </location>
</feature>
<feature type="binding site" evidence="2">
    <location>
        <begin position="126"/>
        <end position="134"/>
    </location>
    <ligand>
        <name>ATP</name>
        <dbReference type="ChEBI" id="CHEBI:30616"/>
    </ligand>
</feature>
<feature type="binding site" evidence="2">
    <location>
        <position position="153"/>
    </location>
    <ligand>
        <name>ATP</name>
        <dbReference type="ChEBI" id="CHEBI:30616"/>
    </ligand>
</feature>